<feature type="chain" id="PRO_0000303746" description="Exodeoxyribonuclease 7 small subunit">
    <location>
        <begin position="1"/>
        <end position="80"/>
    </location>
</feature>
<reference key="1">
    <citation type="journal article" date="2005" name="Nucleic Acids Res.">
        <title>Genome dynamics and diversity of Shigella species, the etiologic agents of bacillary dysentery.</title>
        <authorList>
            <person name="Yang F."/>
            <person name="Yang J."/>
            <person name="Zhang X."/>
            <person name="Chen L."/>
            <person name="Jiang Y."/>
            <person name="Yan Y."/>
            <person name="Tang X."/>
            <person name="Wang J."/>
            <person name="Xiong Z."/>
            <person name="Dong J."/>
            <person name="Xue Y."/>
            <person name="Zhu Y."/>
            <person name="Xu X."/>
            <person name="Sun L."/>
            <person name="Chen S."/>
            <person name="Nie H."/>
            <person name="Peng J."/>
            <person name="Xu J."/>
            <person name="Wang Y."/>
            <person name="Yuan Z."/>
            <person name="Wen Y."/>
            <person name="Yao Z."/>
            <person name="Shen Y."/>
            <person name="Qiang B."/>
            <person name="Hou Y."/>
            <person name="Yu J."/>
            <person name="Jin Q."/>
        </authorList>
    </citation>
    <scope>NUCLEOTIDE SEQUENCE [LARGE SCALE GENOMIC DNA]</scope>
    <source>
        <strain>Sd197</strain>
    </source>
</reference>
<name>EX7S_SHIDS</name>
<keyword id="KW-0963">Cytoplasm</keyword>
<keyword id="KW-0269">Exonuclease</keyword>
<keyword id="KW-0378">Hydrolase</keyword>
<keyword id="KW-0540">Nuclease</keyword>
<keyword id="KW-1185">Reference proteome</keyword>
<dbReference type="EC" id="3.1.11.6" evidence="1"/>
<dbReference type="EMBL" id="CP000034">
    <property type="protein sequence ID" value="ABB60527.1"/>
    <property type="molecule type" value="Genomic_DNA"/>
</dbReference>
<dbReference type="RefSeq" id="WP_001124935.1">
    <property type="nucleotide sequence ID" value="NC_007606.1"/>
</dbReference>
<dbReference type="RefSeq" id="YP_402016.1">
    <property type="nucleotide sequence ID" value="NC_007606.1"/>
</dbReference>
<dbReference type="SMR" id="Q32JI0"/>
<dbReference type="STRING" id="300267.SDY_0308"/>
<dbReference type="EnsemblBacteria" id="ABB60527">
    <property type="protein sequence ID" value="ABB60527"/>
    <property type="gene ID" value="SDY_0308"/>
</dbReference>
<dbReference type="GeneID" id="75202844"/>
<dbReference type="KEGG" id="sdy:SDY_0308"/>
<dbReference type="PATRIC" id="fig|300267.13.peg.354"/>
<dbReference type="HOGENOM" id="CLU_145918_3_3_6"/>
<dbReference type="Proteomes" id="UP000002716">
    <property type="component" value="Chromosome"/>
</dbReference>
<dbReference type="GO" id="GO:0005829">
    <property type="term" value="C:cytosol"/>
    <property type="evidence" value="ECO:0007669"/>
    <property type="project" value="TreeGrafter"/>
</dbReference>
<dbReference type="GO" id="GO:0009318">
    <property type="term" value="C:exodeoxyribonuclease VII complex"/>
    <property type="evidence" value="ECO:0007669"/>
    <property type="project" value="InterPro"/>
</dbReference>
<dbReference type="GO" id="GO:0008855">
    <property type="term" value="F:exodeoxyribonuclease VII activity"/>
    <property type="evidence" value="ECO:0007669"/>
    <property type="project" value="UniProtKB-UniRule"/>
</dbReference>
<dbReference type="GO" id="GO:0006308">
    <property type="term" value="P:DNA catabolic process"/>
    <property type="evidence" value="ECO:0007669"/>
    <property type="project" value="UniProtKB-UniRule"/>
</dbReference>
<dbReference type="FunFam" id="1.10.287.1040:FF:000001">
    <property type="entry name" value="Exodeoxyribonuclease 7 small subunit"/>
    <property type="match status" value="1"/>
</dbReference>
<dbReference type="Gene3D" id="1.10.287.1040">
    <property type="entry name" value="Exonuclease VII, small subunit"/>
    <property type="match status" value="1"/>
</dbReference>
<dbReference type="HAMAP" id="MF_00337">
    <property type="entry name" value="Exonuc_7_S"/>
    <property type="match status" value="1"/>
</dbReference>
<dbReference type="InterPro" id="IPR003761">
    <property type="entry name" value="Exonuc_VII_S"/>
</dbReference>
<dbReference type="InterPro" id="IPR037004">
    <property type="entry name" value="Exonuc_VII_ssu_sf"/>
</dbReference>
<dbReference type="NCBIfam" id="NF002137">
    <property type="entry name" value="PRK00977.1-1"/>
    <property type="match status" value="1"/>
</dbReference>
<dbReference type="NCBIfam" id="NF002140">
    <property type="entry name" value="PRK00977.1-4"/>
    <property type="match status" value="1"/>
</dbReference>
<dbReference type="NCBIfam" id="TIGR01280">
    <property type="entry name" value="xseB"/>
    <property type="match status" value="1"/>
</dbReference>
<dbReference type="PANTHER" id="PTHR34137">
    <property type="entry name" value="EXODEOXYRIBONUCLEASE 7 SMALL SUBUNIT"/>
    <property type="match status" value="1"/>
</dbReference>
<dbReference type="PANTHER" id="PTHR34137:SF1">
    <property type="entry name" value="EXODEOXYRIBONUCLEASE 7 SMALL SUBUNIT"/>
    <property type="match status" value="1"/>
</dbReference>
<dbReference type="Pfam" id="PF02609">
    <property type="entry name" value="Exonuc_VII_S"/>
    <property type="match status" value="1"/>
</dbReference>
<dbReference type="PIRSF" id="PIRSF006488">
    <property type="entry name" value="Exonuc_VII_S"/>
    <property type="match status" value="1"/>
</dbReference>
<dbReference type="SUPFAM" id="SSF116842">
    <property type="entry name" value="XseB-like"/>
    <property type="match status" value="1"/>
</dbReference>
<proteinExistence type="inferred from homology"/>
<sequence length="80" mass="8952">MPKKNEAPASFEKALSELEQIVTRLESGDLPLEEALNEFERGVQLARQGQAKLQQAEQRVQILLSDNEDASLTPFTPDNE</sequence>
<protein>
    <recommendedName>
        <fullName evidence="1">Exodeoxyribonuclease 7 small subunit</fullName>
        <ecNumber evidence="1">3.1.11.6</ecNumber>
    </recommendedName>
    <alternativeName>
        <fullName evidence="1">Exodeoxyribonuclease VII small subunit</fullName>
        <shortName evidence="1">Exonuclease VII small subunit</shortName>
    </alternativeName>
</protein>
<gene>
    <name evidence="1" type="primary">xseB</name>
    <name type="ordered locus">SDY_0308</name>
</gene>
<evidence type="ECO:0000255" key="1">
    <source>
        <dbReference type="HAMAP-Rule" id="MF_00337"/>
    </source>
</evidence>
<organism>
    <name type="scientific">Shigella dysenteriae serotype 1 (strain Sd197)</name>
    <dbReference type="NCBI Taxonomy" id="300267"/>
    <lineage>
        <taxon>Bacteria</taxon>
        <taxon>Pseudomonadati</taxon>
        <taxon>Pseudomonadota</taxon>
        <taxon>Gammaproteobacteria</taxon>
        <taxon>Enterobacterales</taxon>
        <taxon>Enterobacteriaceae</taxon>
        <taxon>Shigella</taxon>
    </lineage>
</organism>
<accession>Q32JI0</accession>
<comment type="function">
    <text evidence="1">Bidirectionally degrades single-stranded DNA into large acid-insoluble oligonucleotides, which are then degraded further into small acid-soluble oligonucleotides.</text>
</comment>
<comment type="catalytic activity">
    <reaction evidence="1">
        <text>Exonucleolytic cleavage in either 5'- to 3'- or 3'- to 5'-direction to yield nucleoside 5'-phosphates.</text>
        <dbReference type="EC" id="3.1.11.6"/>
    </reaction>
</comment>
<comment type="subunit">
    <text evidence="1">Heterooligomer composed of large and small subunits.</text>
</comment>
<comment type="subcellular location">
    <subcellularLocation>
        <location evidence="1">Cytoplasm</location>
    </subcellularLocation>
</comment>
<comment type="similarity">
    <text evidence="1">Belongs to the XseB family.</text>
</comment>